<name>USPB_YERP3</name>
<organism>
    <name type="scientific">Yersinia pseudotuberculosis serotype O:1b (strain IP 31758)</name>
    <dbReference type="NCBI Taxonomy" id="349747"/>
    <lineage>
        <taxon>Bacteria</taxon>
        <taxon>Pseudomonadati</taxon>
        <taxon>Pseudomonadota</taxon>
        <taxon>Gammaproteobacteria</taxon>
        <taxon>Enterobacterales</taxon>
        <taxon>Yersiniaceae</taxon>
        <taxon>Yersinia</taxon>
    </lineage>
</organism>
<reference key="1">
    <citation type="journal article" date="2007" name="PLoS Genet.">
        <title>The complete genome sequence of Yersinia pseudotuberculosis IP31758, the causative agent of Far East scarlet-like fever.</title>
        <authorList>
            <person name="Eppinger M."/>
            <person name="Rosovitz M.J."/>
            <person name="Fricke W.F."/>
            <person name="Rasko D.A."/>
            <person name="Kokorina G."/>
            <person name="Fayolle C."/>
            <person name="Lindler L.E."/>
            <person name="Carniel E."/>
            <person name="Ravel J."/>
        </authorList>
    </citation>
    <scope>NUCLEOTIDE SEQUENCE [LARGE SCALE GENOMIC DNA]</scope>
    <source>
        <strain>IP 31758</strain>
    </source>
</reference>
<proteinExistence type="inferred from homology"/>
<comment type="subcellular location">
    <subcellularLocation>
        <location evidence="1">Cell inner membrane</location>
        <topology evidence="1">Multi-pass membrane protein</topology>
    </subcellularLocation>
</comment>
<comment type="similarity">
    <text evidence="1">Belongs to the universal stress protein B family.</text>
</comment>
<keyword id="KW-0997">Cell inner membrane</keyword>
<keyword id="KW-1003">Cell membrane</keyword>
<keyword id="KW-0472">Membrane</keyword>
<keyword id="KW-0812">Transmembrane</keyword>
<keyword id="KW-1133">Transmembrane helix</keyword>
<accession>A7FP02</accession>
<sequence length="111" mass="12680">MISTVALFWALCVVCVVNMARYYSSLRALLVVLRGCDPLLYQYVDGGGFFTSHGQPSKQIRLVGYIFAQRYLDHHDPEFIRRCERLRGQFILTSALCGLVVVSLVALMLWY</sequence>
<evidence type="ECO:0000255" key="1">
    <source>
        <dbReference type="HAMAP-Rule" id="MF_01088"/>
    </source>
</evidence>
<feature type="chain" id="PRO_1000064885" description="Universal stress protein B">
    <location>
        <begin position="1"/>
        <end position="111"/>
    </location>
</feature>
<feature type="transmembrane region" description="Helical" evidence="1">
    <location>
        <begin position="1"/>
        <end position="21"/>
    </location>
</feature>
<feature type="transmembrane region" description="Helical" evidence="1">
    <location>
        <begin position="90"/>
        <end position="110"/>
    </location>
</feature>
<protein>
    <recommendedName>
        <fullName evidence="1">Universal stress protein B</fullName>
    </recommendedName>
</protein>
<dbReference type="EMBL" id="CP000720">
    <property type="protein sequence ID" value="ABS48104.1"/>
    <property type="molecule type" value="Genomic_DNA"/>
</dbReference>
<dbReference type="RefSeq" id="WP_002209527.1">
    <property type="nucleotide sequence ID" value="NC_009708.1"/>
</dbReference>
<dbReference type="GeneID" id="96663308"/>
<dbReference type="KEGG" id="ypi:YpsIP31758_4034"/>
<dbReference type="HOGENOM" id="CLU_151816_0_0_6"/>
<dbReference type="Proteomes" id="UP000002412">
    <property type="component" value="Chromosome"/>
</dbReference>
<dbReference type="GO" id="GO:0005886">
    <property type="term" value="C:plasma membrane"/>
    <property type="evidence" value="ECO:0007669"/>
    <property type="project" value="UniProtKB-SubCell"/>
</dbReference>
<dbReference type="HAMAP" id="MF_01088">
    <property type="entry name" value="UspB"/>
    <property type="match status" value="1"/>
</dbReference>
<dbReference type="InterPro" id="IPR019598">
    <property type="entry name" value="Universal_stress_protein_B"/>
</dbReference>
<dbReference type="NCBIfam" id="NF003435">
    <property type="entry name" value="PRK04960.1"/>
    <property type="match status" value="1"/>
</dbReference>
<dbReference type="Pfam" id="PF10625">
    <property type="entry name" value="UspB"/>
    <property type="match status" value="1"/>
</dbReference>
<gene>
    <name evidence="1" type="primary">uspB</name>
    <name type="ordered locus">YpsIP31758_4034</name>
</gene>